<keyword id="KW-0997">Cell inner membrane</keyword>
<keyword id="KW-1003">Cell membrane</keyword>
<keyword id="KW-0444">Lipid biosynthesis</keyword>
<keyword id="KW-0443">Lipid metabolism</keyword>
<keyword id="KW-0472">Membrane</keyword>
<keyword id="KW-0594">Phospholipid biosynthesis</keyword>
<keyword id="KW-1208">Phospholipid metabolism</keyword>
<keyword id="KW-0677">Repeat</keyword>
<keyword id="KW-0808">Transferase</keyword>
<keyword id="KW-0812">Transmembrane</keyword>
<keyword id="KW-1133">Transmembrane helix</keyword>
<comment type="function">
    <text evidence="1">Catalyzes the reversible phosphatidyl group transfer from one phosphatidylglycerol molecule to another to form cardiolipin (CL) (diphosphatidylglycerol) and glycerol.</text>
</comment>
<comment type="catalytic activity">
    <reaction evidence="1">
        <text>2 a 1,2-diacyl-sn-glycero-3-phospho-(1'-sn-glycerol) = a cardiolipin + glycerol</text>
        <dbReference type="Rhea" id="RHEA:31451"/>
        <dbReference type="ChEBI" id="CHEBI:17754"/>
        <dbReference type="ChEBI" id="CHEBI:62237"/>
        <dbReference type="ChEBI" id="CHEBI:64716"/>
    </reaction>
</comment>
<comment type="subcellular location">
    <subcellularLocation>
        <location evidence="1">Cell inner membrane</location>
        <topology evidence="1">Multi-pass membrane protein</topology>
    </subcellularLocation>
</comment>
<comment type="similarity">
    <text evidence="1">Belongs to the phospholipase D family. Cardiolipin synthase subfamily. ClsA sub-subfamily.</text>
</comment>
<accession>B5YYF4</accession>
<sequence length="486" mass="54789">MTTVYTLVSWLAILGYWLLIAGVTLRILMKRRAVPSAMAWLLIIYILPLVGIIAYLAVGELHLGKRRAERARAMWPSTAKWLNDLKACKHIFAEENSSVAAPLFKLCERRQGIAGVKGNQLQLMTESDDVMQALIRDIQLARHNIEMVFYIWQPGGMADQVAESLMAAARRGIHCRLMLDSAGSVAFFHSPWPELMRNAGIEVVEALKVNLMRVFLRRMDLRQHRKMIMIDNYIAYTGSMNMVDPRYFKQDAGVGQWIDLMARMEGPIATAMGIIYSCDWEIETGKRILPPPPDVNIMPFEQASGHTIHTIASGPGFPEDLIHQALLTAAYSAREYLIMTTPYFVPSDDLLHAICTAAQRGVDVSIILPRKNDSMLVGWASRAFFTELLAAGVKVYQFEGGLLHTKSVLVDGELSLVGTVNLDMRSLWLNFEITLAIDDKGFGADLAAVQDDYISRSRLLDARLWLKRPLWQRVAERLFYFFSPLL</sequence>
<evidence type="ECO:0000255" key="1">
    <source>
        <dbReference type="HAMAP-Rule" id="MF_00190"/>
    </source>
</evidence>
<gene>
    <name evidence="1" type="primary">clsA</name>
    <name type="synonym">cls</name>
    <name type="ordered locus">ECH74115_1735</name>
</gene>
<name>CLSA_ECO5E</name>
<proteinExistence type="inferred from homology"/>
<reference key="1">
    <citation type="journal article" date="2011" name="Proc. Natl. Acad. Sci. U.S.A.">
        <title>Genomic anatomy of Escherichia coli O157:H7 outbreaks.</title>
        <authorList>
            <person name="Eppinger M."/>
            <person name="Mammel M.K."/>
            <person name="Leclerc J.E."/>
            <person name="Ravel J."/>
            <person name="Cebula T.A."/>
        </authorList>
    </citation>
    <scope>NUCLEOTIDE SEQUENCE [LARGE SCALE GENOMIC DNA]</scope>
    <source>
        <strain>EC4115 / EHEC</strain>
    </source>
</reference>
<protein>
    <recommendedName>
        <fullName evidence="1">Cardiolipin synthase A</fullName>
        <shortName evidence="1">CL synthase</shortName>
        <ecNumber evidence="1">2.7.8.-</ecNumber>
    </recommendedName>
</protein>
<dbReference type="EC" id="2.7.8.-" evidence="1"/>
<dbReference type="EMBL" id="CP001164">
    <property type="protein sequence ID" value="ACI38568.1"/>
    <property type="molecule type" value="Genomic_DNA"/>
</dbReference>
<dbReference type="RefSeq" id="WP_000214510.1">
    <property type="nucleotide sequence ID" value="NC_011353.1"/>
</dbReference>
<dbReference type="SMR" id="B5YYF4"/>
<dbReference type="KEGG" id="ecf:ECH74115_1735"/>
<dbReference type="HOGENOM" id="CLU_038053_1_0_6"/>
<dbReference type="GO" id="GO:0005886">
    <property type="term" value="C:plasma membrane"/>
    <property type="evidence" value="ECO:0007669"/>
    <property type="project" value="UniProtKB-SubCell"/>
</dbReference>
<dbReference type="GO" id="GO:0008808">
    <property type="term" value="F:cardiolipin synthase activity"/>
    <property type="evidence" value="ECO:0007669"/>
    <property type="project" value="InterPro"/>
</dbReference>
<dbReference type="GO" id="GO:0032049">
    <property type="term" value="P:cardiolipin biosynthetic process"/>
    <property type="evidence" value="ECO:0007669"/>
    <property type="project" value="InterPro"/>
</dbReference>
<dbReference type="CDD" id="cd09152">
    <property type="entry name" value="PLDc_EcCLS_like_1"/>
    <property type="match status" value="1"/>
</dbReference>
<dbReference type="CDD" id="cd09158">
    <property type="entry name" value="PLDc_EcCLS_like_2"/>
    <property type="match status" value="1"/>
</dbReference>
<dbReference type="FunFam" id="3.30.870.10:FF:000002">
    <property type="entry name" value="Cardiolipin synthase A"/>
    <property type="match status" value="1"/>
</dbReference>
<dbReference type="FunFam" id="3.30.870.10:FF:000003">
    <property type="entry name" value="Cardiolipin synthase A"/>
    <property type="match status" value="1"/>
</dbReference>
<dbReference type="Gene3D" id="3.30.870.10">
    <property type="entry name" value="Endonuclease Chain A"/>
    <property type="match status" value="2"/>
</dbReference>
<dbReference type="HAMAP" id="MF_00190">
    <property type="entry name" value="Cardiolipin_synth_ClsA"/>
    <property type="match status" value="1"/>
</dbReference>
<dbReference type="InterPro" id="IPR022924">
    <property type="entry name" value="Cardiolipin_synthase"/>
</dbReference>
<dbReference type="InterPro" id="IPR030840">
    <property type="entry name" value="CL_synthase_A"/>
</dbReference>
<dbReference type="InterPro" id="IPR027379">
    <property type="entry name" value="CLS_N"/>
</dbReference>
<dbReference type="InterPro" id="IPR025202">
    <property type="entry name" value="PLD-like_dom"/>
</dbReference>
<dbReference type="InterPro" id="IPR001736">
    <property type="entry name" value="PLipase_D/transphosphatidylase"/>
</dbReference>
<dbReference type="NCBIfam" id="TIGR04265">
    <property type="entry name" value="bac_cardiolipin"/>
    <property type="match status" value="1"/>
</dbReference>
<dbReference type="PANTHER" id="PTHR21248">
    <property type="entry name" value="CARDIOLIPIN SYNTHASE"/>
    <property type="match status" value="1"/>
</dbReference>
<dbReference type="PANTHER" id="PTHR21248:SF22">
    <property type="entry name" value="PHOSPHOLIPASE D"/>
    <property type="match status" value="1"/>
</dbReference>
<dbReference type="Pfam" id="PF13091">
    <property type="entry name" value="PLDc_2"/>
    <property type="match status" value="2"/>
</dbReference>
<dbReference type="Pfam" id="PF13396">
    <property type="entry name" value="PLDc_N"/>
    <property type="match status" value="1"/>
</dbReference>
<dbReference type="SMART" id="SM00155">
    <property type="entry name" value="PLDc"/>
    <property type="match status" value="2"/>
</dbReference>
<dbReference type="SUPFAM" id="SSF56024">
    <property type="entry name" value="Phospholipase D/nuclease"/>
    <property type="match status" value="2"/>
</dbReference>
<dbReference type="PROSITE" id="PS50035">
    <property type="entry name" value="PLD"/>
    <property type="match status" value="2"/>
</dbReference>
<feature type="chain" id="PRO_1000098904" description="Cardiolipin synthase A">
    <location>
        <begin position="1"/>
        <end position="486"/>
    </location>
</feature>
<feature type="transmembrane region" description="Helical" evidence="1">
    <location>
        <begin position="3"/>
        <end position="23"/>
    </location>
</feature>
<feature type="transmembrane region" description="Helical" evidence="1">
    <location>
        <begin position="38"/>
        <end position="58"/>
    </location>
</feature>
<feature type="domain" description="PLD phosphodiesterase 1" evidence="1">
    <location>
        <begin position="219"/>
        <end position="246"/>
    </location>
</feature>
<feature type="domain" description="PLD phosphodiesterase 2" evidence="1">
    <location>
        <begin position="399"/>
        <end position="426"/>
    </location>
</feature>
<feature type="active site" evidence="1">
    <location>
        <position position="224"/>
    </location>
</feature>
<feature type="active site" evidence="1">
    <location>
        <position position="226"/>
    </location>
</feature>
<feature type="active site" evidence="1">
    <location>
        <position position="231"/>
    </location>
</feature>
<feature type="active site" evidence="1">
    <location>
        <position position="404"/>
    </location>
</feature>
<feature type="active site" evidence="1">
    <location>
        <position position="406"/>
    </location>
</feature>
<feature type="active site" evidence="1">
    <location>
        <position position="411"/>
    </location>
</feature>
<organism>
    <name type="scientific">Escherichia coli O157:H7 (strain EC4115 / EHEC)</name>
    <dbReference type="NCBI Taxonomy" id="444450"/>
    <lineage>
        <taxon>Bacteria</taxon>
        <taxon>Pseudomonadati</taxon>
        <taxon>Pseudomonadota</taxon>
        <taxon>Gammaproteobacteria</taxon>
        <taxon>Enterobacterales</taxon>
        <taxon>Enterobacteriaceae</taxon>
        <taxon>Escherichia</taxon>
    </lineage>
</organism>